<feature type="chain" id="PRO_0000095410" description="Tyrosine recombinase XerD">
    <location>
        <begin position="1"/>
        <end position="306"/>
    </location>
</feature>
<feature type="domain" description="Core-binding (CB)" evidence="3">
    <location>
        <begin position="1"/>
        <end position="83"/>
    </location>
</feature>
<feature type="domain" description="Tyr recombinase" evidence="2">
    <location>
        <begin position="104"/>
        <end position="299"/>
    </location>
</feature>
<feature type="active site" evidence="1">
    <location>
        <position position="145"/>
    </location>
</feature>
<feature type="active site" evidence="1">
    <location>
        <position position="176"/>
    </location>
</feature>
<feature type="active site" evidence="1">
    <location>
        <position position="251"/>
    </location>
</feature>
<feature type="active site" evidence="1">
    <location>
        <position position="254"/>
    </location>
</feature>
<feature type="active site" evidence="1">
    <location>
        <position position="277"/>
    </location>
</feature>
<feature type="active site" description="O-(3'-phospho-DNA)-tyrosine intermediate" evidence="1">
    <location>
        <position position="286"/>
    </location>
</feature>
<evidence type="ECO:0000255" key="1">
    <source>
        <dbReference type="HAMAP-Rule" id="MF_01807"/>
    </source>
</evidence>
<evidence type="ECO:0000255" key="2">
    <source>
        <dbReference type="PROSITE-ProRule" id="PRU01246"/>
    </source>
</evidence>
<evidence type="ECO:0000255" key="3">
    <source>
        <dbReference type="PROSITE-ProRule" id="PRU01248"/>
    </source>
</evidence>
<protein>
    <recommendedName>
        <fullName evidence="1">Tyrosine recombinase XerD</fullName>
    </recommendedName>
</protein>
<dbReference type="EMBL" id="AE006914">
    <property type="protein sequence ID" value="AAL03029.1"/>
    <property type="molecule type" value="Genomic_DNA"/>
</dbReference>
<dbReference type="PIR" id="C97761">
    <property type="entry name" value="C97761"/>
</dbReference>
<dbReference type="RefSeq" id="WP_010977131.1">
    <property type="nucleotide sequence ID" value="NC_003103.1"/>
</dbReference>
<dbReference type="SMR" id="Q92IC9"/>
<dbReference type="GeneID" id="927615"/>
<dbReference type="KEGG" id="rco:RC0491"/>
<dbReference type="PATRIC" id="fig|272944.4.peg.562"/>
<dbReference type="HOGENOM" id="CLU_027562_9_0_5"/>
<dbReference type="Proteomes" id="UP000000816">
    <property type="component" value="Chromosome"/>
</dbReference>
<dbReference type="GO" id="GO:0005737">
    <property type="term" value="C:cytoplasm"/>
    <property type="evidence" value="ECO:0007669"/>
    <property type="project" value="UniProtKB-SubCell"/>
</dbReference>
<dbReference type="GO" id="GO:0003677">
    <property type="term" value="F:DNA binding"/>
    <property type="evidence" value="ECO:0007669"/>
    <property type="project" value="UniProtKB-KW"/>
</dbReference>
<dbReference type="GO" id="GO:0009037">
    <property type="term" value="F:tyrosine-based site-specific recombinase activity"/>
    <property type="evidence" value="ECO:0007669"/>
    <property type="project" value="UniProtKB-UniRule"/>
</dbReference>
<dbReference type="GO" id="GO:0051301">
    <property type="term" value="P:cell division"/>
    <property type="evidence" value="ECO:0007669"/>
    <property type="project" value="UniProtKB-KW"/>
</dbReference>
<dbReference type="GO" id="GO:0007059">
    <property type="term" value="P:chromosome segregation"/>
    <property type="evidence" value="ECO:0007669"/>
    <property type="project" value="UniProtKB-UniRule"/>
</dbReference>
<dbReference type="GO" id="GO:0006313">
    <property type="term" value="P:DNA transposition"/>
    <property type="evidence" value="ECO:0007669"/>
    <property type="project" value="UniProtKB-UniRule"/>
</dbReference>
<dbReference type="CDD" id="cd00798">
    <property type="entry name" value="INT_XerDC_C"/>
    <property type="match status" value="1"/>
</dbReference>
<dbReference type="Gene3D" id="1.10.150.130">
    <property type="match status" value="1"/>
</dbReference>
<dbReference type="Gene3D" id="1.10.443.10">
    <property type="entry name" value="Intergrase catalytic core"/>
    <property type="match status" value="1"/>
</dbReference>
<dbReference type="HAMAP" id="MF_01808">
    <property type="entry name" value="Recomb_XerC_XerD"/>
    <property type="match status" value="1"/>
</dbReference>
<dbReference type="HAMAP" id="MF_01807">
    <property type="entry name" value="Recomb_XerD"/>
    <property type="match status" value="1"/>
</dbReference>
<dbReference type="InterPro" id="IPR044068">
    <property type="entry name" value="CB"/>
</dbReference>
<dbReference type="InterPro" id="IPR011010">
    <property type="entry name" value="DNA_brk_join_enz"/>
</dbReference>
<dbReference type="InterPro" id="IPR013762">
    <property type="entry name" value="Integrase-like_cat_sf"/>
</dbReference>
<dbReference type="InterPro" id="IPR002104">
    <property type="entry name" value="Integrase_catalytic"/>
</dbReference>
<dbReference type="InterPro" id="IPR010998">
    <property type="entry name" value="Integrase_recombinase_N"/>
</dbReference>
<dbReference type="InterPro" id="IPR004107">
    <property type="entry name" value="Integrase_SAM-like_N"/>
</dbReference>
<dbReference type="InterPro" id="IPR011932">
    <property type="entry name" value="Recomb_XerD"/>
</dbReference>
<dbReference type="InterPro" id="IPR023009">
    <property type="entry name" value="Tyrosine_recombinase_XerC/XerD"/>
</dbReference>
<dbReference type="InterPro" id="IPR050090">
    <property type="entry name" value="Tyrosine_recombinase_XerCD"/>
</dbReference>
<dbReference type="NCBIfam" id="NF001399">
    <property type="entry name" value="PRK00283.1"/>
    <property type="match status" value="1"/>
</dbReference>
<dbReference type="PANTHER" id="PTHR30349">
    <property type="entry name" value="PHAGE INTEGRASE-RELATED"/>
    <property type="match status" value="1"/>
</dbReference>
<dbReference type="PANTHER" id="PTHR30349:SF81">
    <property type="entry name" value="TYROSINE RECOMBINASE XERC"/>
    <property type="match status" value="1"/>
</dbReference>
<dbReference type="Pfam" id="PF02899">
    <property type="entry name" value="Phage_int_SAM_1"/>
    <property type="match status" value="1"/>
</dbReference>
<dbReference type="Pfam" id="PF00589">
    <property type="entry name" value="Phage_integrase"/>
    <property type="match status" value="1"/>
</dbReference>
<dbReference type="SUPFAM" id="SSF56349">
    <property type="entry name" value="DNA breaking-rejoining enzymes"/>
    <property type="match status" value="1"/>
</dbReference>
<dbReference type="PROSITE" id="PS51900">
    <property type="entry name" value="CB"/>
    <property type="match status" value="1"/>
</dbReference>
<dbReference type="PROSITE" id="PS51898">
    <property type="entry name" value="TYR_RECOMBINASE"/>
    <property type="match status" value="1"/>
</dbReference>
<comment type="function">
    <text evidence="1">Site-specific tyrosine recombinase, which acts by catalyzing the cutting and rejoining of the recombining DNA molecules. The XerC-XerD complex is essential to convert dimers of the bacterial chromosome into monomers to permit their segregation at cell division. It also contributes to the segregational stability of plasmids.</text>
</comment>
<comment type="subunit">
    <text evidence="1">Forms a cyclic heterotetrameric complex composed of two molecules of XerC and two molecules of XerD.</text>
</comment>
<comment type="subcellular location">
    <subcellularLocation>
        <location evidence="1">Cytoplasm</location>
    </subcellularLocation>
</comment>
<comment type="similarity">
    <text evidence="1">Belongs to the 'phage' integrase family. XerD subfamily.</text>
</comment>
<keyword id="KW-0131">Cell cycle</keyword>
<keyword id="KW-0132">Cell division</keyword>
<keyword id="KW-0159">Chromosome partition</keyword>
<keyword id="KW-0963">Cytoplasm</keyword>
<keyword id="KW-0229">DNA integration</keyword>
<keyword id="KW-0233">DNA recombination</keyword>
<keyword id="KW-0238">DNA-binding</keyword>
<accession>Q92IC9</accession>
<name>XERD_RICCN</name>
<reference key="1">
    <citation type="journal article" date="2001" name="Science">
        <title>Mechanisms of evolution in Rickettsia conorii and R. prowazekii.</title>
        <authorList>
            <person name="Ogata H."/>
            <person name="Audic S."/>
            <person name="Renesto-Audiffren P."/>
            <person name="Fournier P.-E."/>
            <person name="Barbe V."/>
            <person name="Samson D."/>
            <person name="Roux V."/>
            <person name="Cossart P."/>
            <person name="Weissenbach J."/>
            <person name="Claverie J.-M."/>
            <person name="Raoult D."/>
        </authorList>
    </citation>
    <scope>NUCLEOTIDE SEQUENCE [LARGE SCALE GENOMIC DNA]</scope>
    <source>
        <strain>ATCC VR-613 / Malish 7</strain>
    </source>
</reference>
<organism>
    <name type="scientific">Rickettsia conorii (strain ATCC VR-613 / Malish 7)</name>
    <dbReference type="NCBI Taxonomy" id="272944"/>
    <lineage>
        <taxon>Bacteria</taxon>
        <taxon>Pseudomonadati</taxon>
        <taxon>Pseudomonadota</taxon>
        <taxon>Alphaproteobacteria</taxon>
        <taxon>Rickettsiales</taxon>
        <taxon>Rickettsiaceae</taxon>
        <taxon>Rickettsieae</taxon>
        <taxon>Rickettsia</taxon>
        <taxon>spotted fever group</taxon>
    </lineage>
</organism>
<sequence length="306" mass="34699">MGFIAQFLEMLLAERALSKNSILSYKRDLFDFQNYLAKHKLSELNITTENIRDWIEYLASNDLQARSINRKISTIKSYYEFLISENHTAFNPVLNVDLPKYQNKLPEILSIAQIKSLLEHCSQDNSPEGIRLNAMIHLLYASGLRVSELVSLKLADILTNKTSKGEVRKIFSVLGKGNKERVIVINEQAVISIAKYLTIRGVFVNKAKPRNLIYLFPSSALAGYMTRQNFAILLKSAALYAGLNPEYISPHILRHSFASHLLEGGADLRVIQELLGHADISTTQIYTHLQTNHLKKALLRHPLNKN</sequence>
<proteinExistence type="inferred from homology"/>
<gene>
    <name evidence="1" type="primary">xerD</name>
    <name type="ordered locus">RC0491</name>
</gene>